<feature type="chain" id="PRO_0000193660" description="Eukaryotic translation initiation factor 4E-1">
    <location>
        <begin position="1"/>
        <end position="227"/>
    </location>
</feature>
<feature type="region of interest" description="Disordered" evidence="4">
    <location>
        <begin position="1"/>
        <end position="52"/>
    </location>
</feature>
<feature type="region of interest" description="EIF4G-binding" evidence="3">
    <location>
        <begin position="52"/>
        <end position="55"/>
    </location>
</feature>
<feature type="region of interest" description="EIF4G-binding" evidence="3">
    <location>
        <begin position="62"/>
        <end position="98"/>
    </location>
</feature>
<feature type="region of interest" description="EIF4G-binding" evidence="3">
    <location>
        <begin position="146"/>
        <end position="155"/>
    </location>
</feature>
<feature type="compositionally biased region" description="Low complexity" evidence="4">
    <location>
        <begin position="9"/>
        <end position="20"/>
    </location>
</feature>
<feature type="compositionally biased region" description="Acidic residues" evidence="4">
    <location>
        <begin position="25"/>
        <end position="37"/>
    </location>
</feature>
<feature type="binding site" evidence="2">
    <location>
        <begin position="70"/>
        <end position="75"/>
    </location>
    <ligand>
        <name>mRNA</name>
        <dbReference type="ChEBI" id="CHEBI:33699"/>
    </ligand>
    <ligandPart>
        <name>N(7)-methylguanosine 5'-triphosphate group</name>
        <dbReference type="ChEBI" id="CHEBI:74429"/>
        <note>m7GTP residue in mRNA cap</note>
    </ligandPart>
</feature>
<feature type="binding site" evidence="2">
    <location>
        <position position="102"/>
    </location>
    <ligand>
        <name>mRNA</name>
        <dbReference type="ChEBI" id="CHEBI:33699"/>
    </ligand>
    <ligandPart>
        <name>N(7)-methylguanosine 5'-triphosphate group</name>
        <dbReference type="ChEBI" id="CHEBI:74429"/>
        <note>m7GTP residue in mRNA cap</note>
    </ligandPart>
</feature>
<feature type="binding site" evidence="2">
    <location>
        <begin position="120"/>
        <end position="121"/>
    </location>
    <ligand>
        <name>mRNA</name>
        <dbReference type="ChEBI" id="CHEBI:33699"/>
    </ligand>
    <ligandPart>
        <name>N(7)-methylguanosine 5'-triphosphate group</name>
        <dbReference type="ChEBI" id="CHEBI:74429"/>
        <note>m7GTP residue in mRNA cap</note>
    </ligandPart>
</feature>
<feature type="binding site" evidence="2">
    <location>
        <begin position="170"/>
        <end position="175"/>
    </location>
    <ligand>
        <name>mRNA</name>
        <dbReference type="ChEBI" id="CHEBI:33699"/>
    </ligand>
    <ligandPart>
        <name>N(7)-methylguanosine 5'-triphosphate group</name>
        <dbReference type="ChEBI" id="CHEBI:74429"/>
        <note>m7GTP residue in mRNA cap</note>
    </ligandPart>
</feature>
<feature type="binding site" evidence="3">
    <location>
        <begin position="215"/>
        <end position="219"/>
    </location>
    <ligand>
        <name>mRNA</name>
        <dbReference type="ChEBI" id="CHEBI:33699"/>
    </ligand>
    <ligandPart>
        <name>N(7)-methylguanosine 5'-triphosphate group</name>
        <dbReference type="ChEBI" id="CHEBI:74429"/>
        <note>m7GTP residue in mRNA cap</note>
    </ligandPart>
</feature>
<feature type="disulfide bond" evidence="2">
    <location>
        <begin position="125"/>
        <end position="163"/>
    </location>
</feature>
<protein>
    <recommendedName>
        <fullName evidence="5 6">Eukaryotic translation initiation factor 4E-1</fullName>
        <shortName evidence="5 6">eIF-4E-1</shortName>
        <shortName evidence="5 6">eIF4E-1</shortName>
    </recommendedName>
    <alternativeName>
        <fullName evidence="6">eIF-4F 25 kDa subunit</fullName>
    </alternativeName>
    <alternativeName>
        <fullName evidence="6">eIF-4F p26 subunit</fullName>
    </alternativeName>
    <alternativeName>
        <fullName evidence="5 6">mRNA cap-binding protein</fullName>
    </alternativeName>
</protein>
<proteinExistence type="evidence at protein level"/>
<reference key="1">
    <citation type="journal article" date="1996" name="Gene">
        <title>Sequences of two expressed sequence tags (EST) from rice encoding different cap-binding proteins.</title>
        <authorList>
            <person name="Aliyeva E."/>
            <person name="Metz A.M."/>
            <person name="Browning K.S."/>
        </authorList>
    </citation>
    <scope>NUCLEOTIDE SEQUENCE [MRNA]</scope>
    <source>
        <strain>cv. Nipponbare</strain>
        <tissue>Root</tissue>
    </source>
</reference>
<reference key="2">
    <citation type="journal article" date="2007" name="Theor. Appl. Genet.">
        <title>Evaluation of genes from eIF4E and eIF4G multigenic families as potential candidates for partial resistance QTLs to Rice yellow mottle virus in rice.</title>
        <authorList>
            <person name="Boisnard A."/>
            <person name="Albar L."/>
            <person name="Thiemele D."/>
            <person name="Rondeau M."/>
            <person name="Ghesquiere A."/>
        </authorList>
    </citation>
    <scope>NUCLEOTIDE SEQUENCE [MRNA]</scope>
    <scope>FUNCTION</scope>
    <scope>SUBUNIT</scope>
    <scope>GENE FAMILY</scope>
    <source>
        <strain>cv. Azucena</strain>
        <tissue>Leaf</tissue>
    </source>
</reference>
<reference key="3">
    <citation type="journal article" date="2002" name="Nature">
        <title>The genome sequence and structure of rice chromosome 1.</title>
        <authorList>
            <person name="Sasaki T."/>
            <person name="Matsumoto T."/>
            <person name="Yamamoto K."/>
            <person name="Sakata K."/>
            <person name="Baba T."/>
            <person name="Katayose Y."/>
            <person name="Wu J."/>
            <person name="Niimura Y."/>
            <person name="Cheng Z."/>
            <person name="Nagamura Y."/>
            <person name="Antonio B.A."/>
            <person name="Kanamori H."/>
            <person name="Hosokawa S."/>
            <person name="Masukawa M."/>
            <person name="Arikawa K."/>
            <person name="Chiden Y."/>
            <person name="Hayashi M."/>
            <person name="Okamoto M."/>
            <person name="Ando T."/>
            <person name="Aoki H."/>
            <person name="Arita K."/>
            <person name="Hamada M."/>
            <person name="Harada C."/>
            <person name="Hijishita S."/>
            <person name="Honda M."/>
            <person name="Ichikawa Y."/>
            <person name="Idonuma A."/>
            <person name="Iijima M."/>
            <person name="Ikeda M."/>
            <person name="Ikeno M."/>
            <person name="Ito S."/>
            <person name="Ito T."/>
            <person name="Ito Y."/>
            <person name="Ito Y."/>
            <person name="Iwabuchi A."/>
            <person name="Kamiya K."/>
            <person name="Karasawa W."/>
            <person name="Katagiri S."/>
            <person name="Kikuta A."/>
            <person name="Kobayashi N."/>
            <person name="Kono I."/>
            <person name="Machita K."/>
            <person name="Maehara T."/>
            <person name="Mizuno H."/>
            <person name="Mizubayashi T."/>
            <person name="Mukai Y."/>
            <person name="Nagasaki H."/>
            <person name="Nakashima M."/>
            <person name="Nakama Y."/>
            <person name="Nakamichi Y."/>
            <person name="Nakamura M."/>
            <person name="Namiki N."/>
            <person name="Negishi M."/>
            <person name="Ohta I."/>
            <person name="Ono N."/>
            <person name="Saji S."/>
            <person name="Sakai K."/>
            <person name="Shibata M."/>
            <person name="Shimokawa T."/>
            <person name="Shomura A."/>
            <person name="Song J."/>
            <person name="Takazaki Y."/>
            <person name="Terasawa K."/>
            <person name="Tsuji K."/>
            <person name="Waki K."/>
            <person name="Yamagata H."/>
            <person name="Yamane H."/>
            <person name="Yoshiki S."/>
            <person name="Yoshihara R."/>
            <person name="Yukawa K."/>
            <person name="Zhong H."/>
            <person name="Iwama H."/>
            <person name="Endo T."/>
            <person name="Ito H."/>
            <person name="Hahn J.H."/>
            <person name="Kim H.-I."/>
            <person name="Eun M.-Y."/>
            <person name="Yano M."/>
            <person name="Jiang J."/>
            <person name="Gojobori T."/>
        </authorList>
    </citation>
    <scope>NUCLEOTIDE SEQUENCE [LARGE SCALE GENOMIC DNA]</scope>
    <source>
        <strain>cv. Nipponbare</strain>
    </source>
</reference>
<reference key="4">
    <citation type="journal article" date="2005" name="Nature">
        <title>The map-based sequence of the rice genome.</title>
        <authorList>
            <consortium name="International rice genome sequencing project (IRGSP)"/>
        </authorList>
    </citation>
    <scope>NUCLEOTIDE SEQUENCE [LARGE SCALE GENOMIC DNA]</scope>
    <source>
        <strain>cv. Nipponbare</strain>
    </source>
</reference>
<reference key="5">
    <citation type="journal article" date="2008" name="Nucleic Acids Res.">
        <title>The rice annotation project database (RAP-DB): 2008 update.</title>
        <authorList>
            <consortium name="The rice annotation project (RAP)"/>
        </authorList>
    </citation>
    <scope>GENOME REANNOTATION</scope>
    <source>
        <strain>cv. Nipponbare</strain>
    </source>
</reference>
<reference key="6">
    <citation type="journal article" date="2013" name="Rice">
        <title>Improvement of the Oryza sativa Nipponbare reference genome using next generation sequence and optical map data.</title>
        <authorList>
            <person name="Kawahara Y."/>
            <person name="de la Bastide M."/>
            <person name="Hamilton J.P."/>
            <person name="Kanamori H."/>
            <person name="McCombie W.R."/>
            <person name="Ouyang S."/>
            <person name="Schwartz D.C."/>
            <person name="Tanaka T."/>
            <person name="Wu J."/>
            <person name="Zhou S."/>
            <person name="Childs K.L."/>
            <person name="Davidson R.M."/>
            <person name="Lin H."/>
            <person name="Quesada-Ocampo L."/>
            <person name="Vaillancourt B."/>
            <person name="Sakai H."/>
            <person name="Lee S.S."/>
            <person name="Kim J."/>
            <person name="Numa H."/>
            <person name="Itoh T."/>
            <person name="Buell C.R."/>
            <person name="Matsumoto T."/>
        </authorList>
    </citation>
    <scope>GENOME REANNOTATION</scope>
    <source>
        <strain>cv. Nipponbare</strain>
    </source>
</reference>
<reference key="7">
    <citation type="journal article" date="2005" name="PLoS Biol.">
        <title>The genomes of Oryza sativa: a history of duplications.</title>
        <authorList>
            <person name="Yu J."/>
            <person name="Wang J."/>
            <person name="Lin W."/>
            <person name="Li S."/>
            <person name="Li H."/>
            <person name="Zhou J."/>
            <person name="Ni P."/>
            <person name="Dong W."/>
            <person name="Hu S."/>
            <person name="Zeng C."/>
            <person name="Zhang J."/>
            <person name="Zhang Y."/>
            <person name="Li R."/>
            <person name="Xu Z."/>
            <person name="Li S."/>
            <person name="Li X."/>
            <person name="Zheng H."/>
            <person name="Cong L."/>
            <person name="Lin L."/>
            <person name="Yin J."/>
            <person name="Geng J."/>
            <person name="Li G."/>
            <person name="Shi J."/>
            <person name="Liu J."/>
            <person name="Lv H."/>
            <person name="Li J."/>
            <person name="Wang J."/>
            <person name="Deng Y."/>
            <person name="Ran L."/>
            <person name="Shi X."/>
            <person name="Wang X."/>
            <person name="Wu Q."/>
            <person name="Li C."/>
            <person name="Ren X."/>
            <person name="Wang J."/>
            <person name="Wang X."/>
            <person name="Li D."/>
            <person name="Liu D."/>
            <person name="Zhang X."/>
            <person name="Ji Z."/>
            <person name="Zhao W."/>
            <person name="Sun Y."/>
            <person name="Zhang Z."/>
            <person name="Bao J."/>
            <person name="Han Y."/>
            <person name="Dong L."/>
            <person name="Ji J."/>
            <person name="Chen P."/>
            <person name="Wu S."/>
            <person name="Liu J."/>
            <person name="Xiao Y."/>
            <person name="Bu D."/>
            <person name="Tan J."/>
            <person name="Yang L."/>
            <person name="Ye C."/>
            <person name="Zhang J."/>
            <person name="Xu J."/>
            <person name="Zhou Y."/>
            <person name="Yu Y."/>
            <person name="Zhang B."/>
            <person name="Zhuang S."/>
            <person name="Wei H."/>
            <person name="Liu B."/>
            <person name="Lei M."/>
            <person name="Yu H."/>
            <person name="Li Y."/>
            <person name="Xu H."/>
            <person name="Wei S."/>
            <person name="He X."/>
            <person name="Fang L."/>
            <person name="Zhang Z."/>
            <person name="Zhang Y."/>
            <person name="Huang X."/>
            <person name="Su Z."/>
            <person name="Tong W."/>
            <person name="Li J."/>
            <person name="Tong Z."/>
            <person name="Li S."/>
            <person name="Ye J."/>
            <person name="Wang L."/>
            <person name="Fang L."/>
            <person name="Lei T."/>
            <person name="Chen C.-S."/>
            <person name="Chen H.-C."/>
            <person name="Xu Z."/>
            <person name="Li H."/>
            <person name="Huang H."/>
            <person name="Zhang F."/>
            <person name="Xu H."/>
            <person name="Li N."/>
            <person name="Zhao C."/>
            <person name="Li S."/>
            <person name="Dong L."/>
            <person name="Huang Y."/>
            <person name="Li L."/>
            <person name="Xi Y."/>
            <person name="Qi Q."/>
            <person name="Li W."/>
            <person name="Zhang B."/>
            <person name="Hu W."/>
            <person name="Zhang Y."/>
            <person name="Tian X."/>
            <person name="Jiao Y."/>
            <person name="Liang X."/>
            <person name="Jin J."/>
            <person name="Gao L."/>
            <person name="Zheng W."/>
            <person name="Hao B."/>
            <person name="Liu S.-M."/>
            <person name="Wang W."/>
            <person name="Yuan L."/>
            <person name="Cao M."/>
            <person name="McDermott J."/>
            <person name="Samudrala R."/>
            <person name="Wang J."/>
            <person name="Wong G.K.-S."/>
            <person name="Yang H."/>
        </authorList>
    </citation>
    <scope>NUCLEOTIDE SEQUENCE [LARGE SCALE GENOMIC DNA]</scope>
    <source>
        <strain>cv. Nipponbare</strain>
    </source>
</reference>
<reference key="8">
    <citation type="journal article" date="2003" name="Science">
        <title>Collection, mapping, and annotation of over 28,000 cDNA clones from japonica rice.</title>
        <authorList>
            <consortium name="The rice full-length cDNA consortium"/>
        </authorList>
    </citation>
    <scope>NUCLEOTIDE SEQUENCE [LARGE SCALE MRNA]</scope>
    <source>
        <strain>cv. Nipponbare</strain>
    </source>
</reference>
<reference key="9">
    <citation type="journal article" date="2014" name="Infect. Genet. Evol.">
        <title>Evolution of plant eukaryotic initiation factor 4E (eIF4E) and potyvirus genome-linked protein (VPg): a game of mirrors impacting resistance spectrum and durability.</title>
        <authorList>
            <person name="Moury B."/>
            <person name="Charron C."/>
            <person name="Janzac B."/>
            <person name="Simon V."/>
            <person name="Gallois J.L."/>
            <person name="Palloix A."/>
            <person name="Caranta C."/>
        </authorList>
    </citation>
    <scope>GENE FAMILY</scope>
    <scope>REVIEW</scope>
</reference>
<gene>
    <name evidence="5 6" type="primary">eIF4E</name>
    <name evidence="7" type="ordered locus">Os01g0970400</name>
    <name evidence="7" type="ordered locus">LOC_Os01g73880</name>
    <name evidence="8" type="ORF">OJ1656_A11.43</name>
    <name evidence="9" type="ORF">OsJ_04917</name>
</gene>
<evidence type="ECO:0000250" key="1">
    <source>
        <dbReference type="UniProtKB" id="C6ZJZ3"/>
    </source>
</evidence>
<evidence type="ECO:0000250" key="2">
    <source>
        <dbReference type="UniProtKB" id="P29557"/>
    </source>
</evidence>
<evidence type="ECO:0000250" key="3">
    <source>
        <dbReference type="UniProtKB" id="Q00LS8"/>
    </source>
</evidence>
<evidence type="ECO:0000256" key="4">
    <source>
        <dbReference type="SAM" id="MobiDB-lite"/>
    </source>
</evidence>
<evidence type="ECO:0000303" key="5">
    <source>
    </source>
</evidence>
<evidence type="ECO:0000303" key="6">
    <source>
    </source>
</evidence>
<evidence type="ECO:0000305" key="7"/>
<evidence type="ECO:0000312" key="8">
    <source>
        <dbReference type="EMBL" id="BAB85343.1"/>
    </source>
</evidence>
<evidence type="ECO:0000312" key="9">
    <source>
        <dbReference type="EMBL" id="EEE56085.1"/>
    </source>
</evidence>
<accession>P48599</accession>
<accession>B9EWY9</accession>
<accession>Q0JFN9</accession>
<accession>Q7F2S7</accession>
<sequence length="227" mass="25465">MAEEHETRPPSAGRPPSSGRGRADDADEREEGEIADDDSGHAPPQANPAAPHPLEHAWTFWFDNPQGKSKQATWGSSIRPIHTFSTVEDFWSLYNNIHHPSKLVVGADFHCFKNKIEPKWEDPICANGGKWTFSCGRGKSDTMWLHTLLAMIGEQFDYGDEICGAVVSVRGKQERIAIWTKNAANEAAQISIGKQWKEFLDYKDSIGFIVHDDAKKMDKGLKNRYTV</sequence>
<comment type="function">
    <text evidence="5">Component of the protein complex eIF4F, which is involved in the recognition of the mRNA cap, ATP-dependent unwinding of 5'-terminal secondary structure and recruitment of mRNA to the ribosome (PubMed:17898986). Recognizes and binds the 7-methylguanosine-containing mRNA cap during an early step in the initiation of protein synthesis and facilitates ribosome binding by inducing the unwinding of the mRNAs secondary structures (PubMed:17898986).</text>
</comment>
<comment type="subunit">
    <text evidence="5">EIF4F is a multi-subunit complex, the composition of which varies with external and internal environmental conditions (PubMed:17898986). It is composed of at least EIF4A, EIF4E and EIF4G. EIF4E is also known to interact with other partners (PubMed:17898986). In higher plants two isoforms of EIF4F have been identified, named isoform EIF4F and isoform EIF(iso)4F (PubMed:17898986). Isoform EIF4F has subunits p220 and p26, whereas isoform EIF(iso)4F has subunits p82 and p28 (PubMed:17898986).</text>
</comment>
<comment type="subcellular location">
    <subcellularLocation>
        <location evidence="1">Nucleus</location>
    </subcellularLocation>
    <subcellularLocation>
        <location evidence="1">Cytoplasm</location>
    </subcellularLocation>
</comment>
<comment type="PTM">
    <text evidence="2">According to the redox status, the Cys-125-Cys-163 disulfide bridge may have a role in regulating protein function by affecting its ability to bind capped mRNA.</text>
</comment>
<comment type="similarity">
    <text evidence="7">Belongs to the eukaryotic initiation factor 4E family.</text>
</comment>
<name>IF4E1_ORYSJ</name>
<keyword id="KW-0963">Cytoplasm</keyword>
<keyword id="KW-1015">Disulfide bond</keyword>
<keyword id="KW-0396">Initiation factor</keyword>
<keyword id="KW-0539">Nucleus</keyword>
<keyword id="KW-0648">Protein biosynthesis</keyword>
<keyword id="KW-1185">Reference proteome</keyword>
<keyword id="KW-0694">RNA-binding</keyword>
<keyword id="KW-0810">Translation regulation</keyword>
<dbReference type="EMBL" id="U34597">
    <property type="protein sequence ID" value="AAB40348.1"/>
    <property type="molecule type" value="mRNA"/>
</dbReference>
<dbReference type="EMBL" id="AM411441">
    <property type="protein sequence ID" value="CAL69635.1"/>
    <property type="molecule type" value="mRNA"/>
</dbReference>
<dbReference type="EMBL" id="AP003448">
    <property type="protein sequence ID" value="BAB85343.1"/>
    <property type="molecule type" value="Genomic_DNA"/>
</dbReference>
<dbReference type="EMBL" id="AP008207">
    <property type="protein sequence ID" value="BAF07439.1"/>
    <property type="molecule type" value="Genomic_DNA"/>
</dbReference>
<dbReference type="EMBL" id="AP014957">
    <property type="protein sequence ID" value="BAS76420.1"/>
    <property type="molecule type" value="Genomic_DNA"/>
</dbReference>
<dbReference type="EMBL" id="CM000138">
    <property type="protein sequence ID" value="EEE56085.1"/>
    <property type="molecule type" value="Genomic_DNA"/>
</dbReference>
<dbReference type="EMBL" id="AK069207">
    <property type="protein sequence ID" value="BAG91316.1"/>
    <property type="molecule type" value="mRNA"/>
</dbReference>
<dbReference type="EMBL" id="AK099169">
    <property type="protein sequence ID" value="BAG93969.1"/>
    <property type="molecule type" value="mRNA"/>
</dbReference>
<dbReference type="PIR" id="JC5330">
    <property type="entry name" value="JC5330"/>
</dbReference>
<dbReference type="RefSeq" id="XP_015629641.1">
    <property type="nucleotide sequence ID" value="XM_015774155.1"/>
</dbReference>
<dbReference type="SMR" id="P48599"/>
<dbReference type="FunCoup" id="P48599">
    <property type="interactions" value="3042"/>
</dbReference>
<dbReference type="STRING" id="39947.P48599"/>
<dbReference type="PaxDb" id="39947-P48599"/>
<dbReference type="EnsemblPlants" id="Os01t0970400-01">
    <property type="protein sequence ID" value="Os01t0970400-01"/>
    <property type="gene ID" value="Os01g0970400"/>
</dbReference>
<dbReference type="Gramene" id="Os01t0970400-01">
    <property type="protein sequence ID" value="Os01t0970400-01"/>
    <property type="gene ID" value="Os01g0970400"/>
</dbReference>
<dbReference type="KEGG" id="dosa:Os01g0970400"/>
<dbReference type="eggNOG" id="KOG1670">
    <property type="taxonomic scope" value="Eukaryota"/>
</dbReference>
<dbReference type="HOGENOM" id="CLU_043552_2_1_1"/>
<dbReference type="InParanoid" id="P48599"/>
<dbReference type="OMA" id="QTEFKMM"/>
<dbReference type="OrthoDB" id="590761at2759"/>
<dbReference type="Proteomes" id="UP000000763">
    <property type="component" value="Chromosome 1"/>
</dbReference>
<dbReference type="Proteomes" id="UP000007752">
    <property type="component" value="Chromosome 1"/>
</dbReference>
<dbReference type="Proteomes" id="UP000059680">
    <property type="component" value="Chromosome 1"/>
</dbReference>
<dbReference type="ExpressionAtlas" id="P48599">
    <property type="expression patterns" value="baseline and differential"/>
</dbReference>
<dbReference type="GO" id="GO:0005737">
    <property type="term" value="C:cytoplasm"/>
    <property type="evidence" value="ECO:0000250"/>
    <property type="project" value="UniProtKB"/>
</dbReference>
<dbReference type="GO" id="GO:0016281">
    <property type="term" value="C:eukaryotic translation initiation factor 4F complex"/>
    <property type="evidence" value="ECO:0000318"/>
    <property type="project" value="GO_Central"/>
</dbReference>
<dbReference type="GO" id="GO:0005634">
    <property type="term" value="C:nucleus"/>
    <property type="evidence" value="ECO:0000250"/>
    <property type="project" value="UniProtKB"/>
</dbReference>
<dbReference type="GO" id="GO:0000340">
    <property type="term" value="F:RNA 7-methylguanosine cap binding"/>
    <property type="evidence" value="ECO:0000318"/>
    <property type="project" value="GO_Central"/>
</dbReference>
<dbReference type="GO" id="GO:0003723">
    <property type="term" value="F:RNA binding"/>
    <property type="evidence" value="ECO:0000250"/>
    <property type="project" value="UniProtKB"/>
</dbReference>
<dbReference type="GO" id="GO:0003743">
    <property type="term" value="F:translation initiation factor activity"/>
    <property type="evidence" value="ECO:0000250"/>
    <property type="project" value="UniProtKB"/>
</dbReference>
<dbReference type="GO" id="GO:0051607">
    <property type="term" value="P:defense response to virus"/>
    <property type="evidence" value="ECO:0000250"/>
    <property type="project" value="UniProtKB"/>
</dbReference>
<dbReference type="GO" id="GO:0006417">
    <property type="term" value="P:regulation of translation"/>
    <property type="evidence" value="ECO:0007669"/>
    <property type="project" value="UniProtKB-KW"/>
</dbReference>
<dbReference type="GO" id="GO:0006413">
    <property type="term" value="P:translational initiation"/>
    <property type="evidence" value="ECO:0000250"/>
    <property type="project" value="UniProtKB"/>
</dbReference>
<dbReference type="FunFam" id="3.30.760.10:FF:000003">
    <property type="entry name" value="Eukaryotic translation initiation factor 4E"/>
    <property type="match status" value="1"/>
</dbReference>
<dbReference type="Gene3D" id="3.30.760.10">
    <property type="entry name" value="RNA Cap, Translation Initiation Factor Eif4e"/>
    <property type="match status" value="1"/>
</dbReference>
<dbReference type="InterPro" id="IPR023398">
    <property type="entry name" value="TIF_eIF4e-like"/>
</dbReference>
<dbReference type="InterPro" id="IPR001040">
    <property type="entry name" value="TIF_eIF_4E"/>
</dbReference>
<dbReference type="InterPro" id="IPR019770">
    <property type="entry name" value="TIF_eIF_4E_CS"/>
</dbReference>
<dbReference type="PANTHER" id="PTHR11960">
    <property type="entry name" value="EUKARYOTIC TRANSLATION INITIATION FACTOR 4E RELATED"/>
    <property type="match status" value="1"/>
</dbReference>
<dbReference type="PANTHER" id="PTHR11960:SF8">
    <property type="entry name" value="EUKARYOTIC TRANSLATION INITIATION FACTOR 4E1-RELATED"/>
    <property type="match status" value="1"/>
</dbReference>
<dbReference type="Pfam" id="PF01652">
    <property type="entry name" value="IF4E"/>
    <property type="match status" value="1"/>
</dbReference>
<dbReference type="SUPFAM" id="SSF55418">
    <property type="entry name" value="eIF4e-like"/>
    <property type="match status" value="1"/>
</dbReference>
<dbReference type="PROSITE" id="PS00813">
    <property type="entry name" value="IF4E"/>
    <property type="match status" value="1"/>
</dbReference>
<organism>
    <name type="scientific">Oryza sativa subsp. japonica</name>
    <name type="common">Rice</name>
    <dbReference type="NCBI Taxonomy" id="39947"/>
    <lineage>
        <taxon>Eukaryota</taxon>
        <taxon>Viridiplantae</taxon>
        <taxon>Streptophyta</taxon>
        <taxon>Embryophyta</taxon>
        <taxon>Tracheophyta</taxon>
        <taxon>Spermatophyta</taxon>
        <taxon>Magnoliopsida</taxon>
        <taxon>Liliopsida</taxon>
        <taxon>Poales</taxon>
        <taxon>Poaceae</taxon>
        <taxon>BOP clade</taxon>
        <taxon>Oryzoideae</taxon>
        <taxon>Oryzeae</taxon>
        <taxon>Oryzinae</taxon>
        <taxon>Oryza</taxon>
        <taxon>Oryza sativa</taxon>
    </lineage>
</organism>